<protein>
    <recommendedName>
        <fullName evidence="1">Alanine--tRNA ligase</fullName>
        <ecNumber evidence="1">6.1.1.7</ecNumber>
    </recommendedName>
    <alternativeName>
        <fullName evidence="1">Alanyl-tRNA synthetase</fullName>
        <shortName evidence="1">AlaRS</shortName>
    </alternativeName>
</protein>
<accession>A8GQ73</accession>
<keyword id="KW-0030">Aminoacyl-tRNA synthetase</keyword>
<keyword id="KW-0067">ATP-binding</keyword>
<keyword id="KW-0963">Cytoplasm</keyword>
<keyword id="KW-0436">Ligase</keyword>
<keyword id="KW-0479">Metal-binding</keyword>
<keyword id="KW-0547">Nucleotide-binding</keyword>
<keyword id="KW-0648">Protein biosynthesis</keyword>
<keyword id="KW-0694">RNA-binding</keyword>
<keyword id="KW-0820">tRNA-binding</keyword>
<keyword id="KW-0862">Zinc</keyword>
<sequence length="878" mass="99191">MTKFTTEEVRSKFITYFKTNNHTHVPASSLIPHNDPSLMFVNSGMVQFKNVFTGQTKRPYHTAVTSQKSVRAGGKHNDLENVGYTARHHTFFEMLGNFSFGDYFKEQAIYYAWNLLTKEFELPKDKLYATIYHTDDEAASCWKKIAGFGDDRIIKIKTNDNFWSMGDTGPCGPCSEIFYDHGEQIYGGLPGTKYEDGDRFIEIWNMVFMQYEQIDKDTRIELPQKSIDTGMGLERMTAVLQHVSNNYDIDLFQEIINFTENIVKVKIEGEAKFSYRVIADHLRASSFLIADGVIPSNEGRGYVLRRIMRRAMRHAHMLGSQEPLMYKLLPKLVDLMGSVYPELKRAESFISRILEQEEIRFKTTLERGLKLLTEETETLKKGNELSGEIAFKLYDTYGFPLDLTEDILKNRDISIDHKGFEEQMLAQKERARKAWLGSGESKTDQLWFDIKEQHGSTEFLGYTLNEAECKIIALIKDNNLVNDIKKIDTQFLLISNQTPFYGESGGQMGDIGTIFAKDSDIEVIDTLKYLGSIIAHKCILKKGQINVGDSANFSIDIKYRQNLRIHHSATHILHAVLHEVLGQHVTQKGSLVAPTYLRFDISHSKAVTHEEITSIEDKVNEIIRDNHEVNTTLMTTEDAVKQGVMALFGEKYDSEVRVVKMGETSLELCGGTHVRRTGDIGSFKITSESAIAAGVRRIEAVCGEFVIKLIREKDSLLKSIENSLKTNKNELVTKVNNTLERNKELEKELEKTHLARLDLSIEQIEKQAEDIKGVKLIYRHIENLDNKVLRQAAANLTNKVEDLIVVYITGNNDKLSITVAVSKAITDKYNACIIAKELSLFLGGSGGGGQASLAQAGGSDIGKLTNIHEKLYSFITAS</sequence>
<name>SYA_RICAH</name>
<feature type="chain" id="PRO_0000347762" description="Alanine--tRNA ligase">
    <location>
        <begin position="1"/>
        <end position="878"/>
    </location>
</feature>
<feature type="binding site" evidence="1">
    <location>
        <position position="567"/>
    </location>
    <ligand>
        <name>Zn(2+)</name>
        <dbReference type="ChEBI" id="CHEBI:29105"/>
    </ligand>
</feature>
<feature type="binding site" evidence="1">
    <location>
        <position position="571"/>
    </location>
    <ligand>
        <name>Zn(2+)</name>
        <dbReference type="ChEBI" id="CHEBI:29105"/>
    </ligand>
</feature>
<feature type="binding site" evidence="1">
    <location>
        <position position="669"/>
    </location>
    <ligand>
        <name>Zn(2+)</name>
        <dbReference type="ChEBI" id="CHEBI:29105"/>
    </ligand>
</feature>
<feature type="binding site" evidence="1">
    <location>
        <position position="673"/>
    </location>
    <ligand>
        <name>Zn(2+)</name>
        <dbReference type="ChEBI" id="CHEBI:29105"/>
    </ligand>
</feature>
<evidence type="ECO:0000255" key="1">
    <source>
        <dbReference type="HAMAP-Rule" id="MF_00036"/>
    </source>
</evidence>
<organism>
    <name type="scientific">Rickettsia akari (strain Hartford)</name>
    <dbReference type="NCBI Taxonomy" id="293614"/>
    <lineage>
        <taxon>Bacteria</taxon>
        <taxon>Pseudomonadati</taxon>
        <taxon>Pseudomonadota</taxon>
        <taxon>Alphaproteobacteria</taxon>
        <taxon>Rickettsiales</taxon>
        <taxon>Rickettsiaceae</taxon>
        <taxon>Rickettsieae</taxon>
        <taxon>Rickettsia</taxon>
        <taxon>spotted fever group</taxon>
    </lineage>
</organism>
<proteinExistence type="inferred from homology"/>
<comment type="function">
    <text evidence="1">Catalyzes the attachment of alanine to tRNA(Ala) in a two-step reaction: alanine is first activated by ATP to form Ala-AMP and then transferred to the acceptor end of tRNA(Ala). Also edits incorrectly charged Ser-tRNA(Ala) and Gly-tRNA(Ala) via its editing domain.</text>
</comment>
<comment type="catalytic activity">
    <reaction evidence="1">
        <text>tRNA(Ala) + L-alanine + ATP = L-alanyl-tRNA(Ala) + AMP + diphosphate</text>
        <dbReference type="Rhea" id="RHEA:12540"/>
        <dbReference type="Rhea" id="RHEA-COMP:9657"/>
        <dbReference type="Rhea" id="RHEA-COMP:9923"/>
        <dbReference type="ChEBI" id="CHEBI:30616"/>
        <dbReference type="ChEBI" id="CHEBI:33019"/>
        <dbReference type="ChEBI" id="CHEBI:57972"/>
        <dbReference type="ChEBI" id="CHEBI:78442"/>
        <dbReference type="ChEBI" id="CHEBI:78497"/>
        <dbReference type="ChEBI" id="CHEBI:456215"/>
        <dbReference type="EC" id="6.1.1.7"/>
    </reaction>
</comment>
<comment type="cofactor">
    <cofactor evidence="1">
        <name>Zn(2+)</name>
        <dbReference type="ChEBI" id="CHEBI:29105"/>
    </cofactor>
    <text evidence="1">Binds 1 zinc ion per subunit.</text>
</comment>
<comment type="subcellular location">
    <subcellularLocation>
        <location evidence="1">Cytoplasm</location>
    </subcellularLocation>
</comment>
<comment type="domain">
    <text evidence="1">Consists of three domains; the N-terminal catalytic domain, the editing domain and the C-terminal C-Ala domain. The editing domain removes incorrectly charged amino acids, while the C-Ala domain, along with tRNA(Ala), serves as a bridge to cooperatively bring together the editing and aminoacylation centers thus stimulating deacylation of misacylated tRNAs.</text>
</comment>
<comment type="similarity">
    <text evidence="1">Belongs to the class-II aminoacyl-tRNA synthetase family.</text>
</comment>
<dbReference type="EC" id="6.1.1.7" evidence="1"/>
<dbReference type="EMBL" id="CP000847">
    <property type="protein sequence ID" value="ABV75548.1"/>
    <property type="molecule type" value="Genomic_DNA"/>
</dbReference>
<dbReference type="RefSeq" id="WP_012150177.1">
    <property type="nucleotide sequence ID" value="NC_009881.1"/>
</dbReference>
<dbReference type="SMR" id="A8GQ73"/>
<dbReference type="STRING" id="293614.A1C_06625"/>
<dbReference type="KEGG" id="rak:A1C_06625"/>
<dbReference type="eggNOG" id="COG0013">
    <property type="taxonomic scope" value="Bacteria"/>
</dbReference>
<dbReference type="HOGENOM" id="CLU_004485_1_1_5"/>
<dbReference type="Proteomes" id="UP000006830">
    <property type="component" value="Chromosome"/>
</dbReference>
<dbReference type="GO" id="GO:0005829">
    <property type="term" value="C:cytosol"/>
    <property type="evidence" value="ECO:0007669"/>
    <property type="project" value="TreeGrafter"/>
</dbReference>
<dbReference type="GO" id="GO:0004813">
    <property type="term" value="F:alanine-tRNA ligase activity"/>
    <property type="evidence" value="ECO:0007669"/>
    <property type="project" value="UniProtKB-UniRule"/>
</dbReference>
<dbReference type="GO" id="GO:0002161">
    <property type="term" value="F:aminoacyl-tRNA deacylase activity"/>
    <property type="evidence" value="ECO:0007669"/>
    <property type="project" value="TreeGrafter"/>
</dbReference>
<dbReference type="GO" id="GO:0005524">
    <property type="term" value="F:ATP binding"/>
    <property type="evidence" value="ECO:0007669"/>
    <property type="project" value="UniProtKB-UniRule"/>
</dbReference>
<dbReference type="GO" id="GO:0000049">
    <property type="term" value="F:tRNA binding"/>
    <property type="evidence" value="ECO:0007669"/>
    <property type="project" value="UniProtKB-KW"/>
</dbReference>
<dbReference type="GO" id="GO:0008270">
    <property type="term" value="F:zinc ion binding"/>
    <property type="evidence" value="ECO:0007669"/>
    <property type="project" value="UniProtKB-UniRule"/>
</dbReference>
<dbReference type="GO" id="GO:0006419">
    <property type="term" value="P:alanyl-tRNA aminoacylation"/>
    <property type="evidence" value="ECO:0007669"/>
    <property type="project" value="UniProtKB-UniRule"/>
</dbReference>
<dbReference type="GO" id="GO:0045892">
    <property type="term" value="P:negative regulation of DNA-templated transcription"/>
    <property type="evidence" value="ECO:0007669"/>
    <property type="project" value="TreeGrafter"/>
</dbReference>
<dbReference type="CDD" id="cd00673">
    <property type="entry name" value="AlaRS_core"/>
    <property type="match status" value="1"/>
</dbReference>
<dbReference type="FunFam" id="3.10.310.40:FF:000001">
    <property type="entry name" value="Alanine--tRNA ligase"/>
    <property type="match status" value="1"/>
</dbReference>
<dbReference type="FunFam" id="3.30.54.20:FF:000001">
    <property type="entry name" value="Alanine--tRNA ligase"/>
    <property type="match status" value="1"/>
</dbReference>
<dbReference type="FunFam" id="3.30.930.10:FF:000004">
    <property type="entry name" value="Alanine--tRNA ligase"/>
    <property type="match status" value="1"/>
</dbReference>
<dbReference type="FunFam" id="3.30.980.10:FF:000004">
    <property type="entry name" value="Alanine--tRNA ligase, cytoplasmic"/>
    <property type="match status" value="1"/>
</dbReference>
<dbReference type="Gene3D" id="2.40.30.130">
    <property type="match status" value="1"/>
</dbReference>
<dbReference type="Gene3D" id="3.10.310.40">
    <property type="match status" value="1"/>
</dbReference>
<dbReference type="Gene3D" id="3.30.54.20">
    <property type="match status" value="1"/>
</dbReference>
<dbReference type="Gene3D" id="3.30.930.10">
    <property type="entry name" value="Bira Bifunctional Protein, Domain 2"/>
    <property type="match status" value="1"/>
</dbReference>
<dbReference type="Gene3D" id="3.30.980.10">
    <property type="entry name" value="Threonyl-trna Synthetase, Chain A, domain 2"/>
    <property type="match status" value="1"/>
</dbReference>
<dbReference type="HAMAP" id="MF_00036_B">
    <property type="entry name" value="Ala_tRNA_synth_B"/>
    <property type="match status" value="1"/>
</dbReference>
<dbReference type="InterPro" id="IPR045864">
    <property type="entry name" value="aa-tRNA-synth_II/BPL/LPL"/>
</dbReference>
<dbReference type="InterPro" id="IPR002318">
    <property type="entry name" value="Ala-tRNA-lgiase_IIc"/>
</dbReference>
<dbReference type="InterPro" id="IPR018162">
    <property type="entry name" value="Ala-tRNA-ligase_IIc_anticod-bd"/>
</dbReference>
<dbReference type="InterPro" id="IPR018165">
    <property type="entry name" value="Ala-tRNA-synth_IIc_core"/>
</dbReference>
<dbReference type="InterPro" id="IPR018164">
    <property type="entry name" value="Ala-tRNA-synth_IIc_N"/>
</dbReference>
<dbReference type="InterPro" id="IPR050058">
    <property type="entry name" value="Ala-tRNA_ligase"/>
</dbReference>
<dbReference type="InterPro" id="IPR023033">
    <property type="entry name" value="Ala_tRNA_ligase_euk/bac"/>
</dbReference>
<dbReference type="InterPro" id="IPR003156">
    <property type="entry name" value="DHHA1_dom"/>
</dbReference>
<dbReference type="InterPro" id="IPR018163">
    <property type="entry name" value="Thr/Ala-tRNA-synth_IIc_edit"/>
</dbReference>
<dbReference type="InterPro" id="IPR009000">
    <property type="entry name" value="Transl_B-barrel_sf"/>
</dbReference>
<dbReference type="InterPro" id="IPR012947">
    <property type="entry name" value="tRNA_SAD"/>
</dbReference>
<dbReference type="NCBIfam" id="TIGR00344">
    <property type="entry name" value="alaS"/>
    <property type="match status" value="1"/>
</dbReference>
<dbReference type="PANTHER" id="PTHR11777:SF9">
    <property type="entry name" value="ALANINE--TRNA LIGASE, CYTOPLASMIC"/>
    <property type="match status" value="1"/>
</dbReference>
<dbReference type="PANTHER" id="PTHR11777">
    <property type="entry name" value="ALANYL-TRNA SYNTHETASE"/>
    <property type="match status" value="1"/>
</dbReference>
<dbReference type="Pfam" id="PF02272">
    <property type="entry name" value="DHHA1"/>
    <property type="match status" value="1"/>
</dbReference>
<dbReference type="Pfam" id="PF01411">
    <property type="entry name" value="tRNA-synt_2c"/>
    <property type="match status" value="1"/>
</dbReference>
<dbReference type="Pfam" id="PF07973">
    <property type="entry name" value="tRNA_SAD"/>
    <property type="match status" value="1"/>
</dbReference>
<dbReference type="PRINTS" id="PR00980">
    <property type="entry name" value="TRNASYNTHALA"/>
</dbReference>
<dbReference type="SMART" id="SM00863">
    <property type="entry name" value="tRNA_SAD"/>
    <property type="match status" value="1"/>
</dbReference>
<dbReference type="SUPFAM" id="SSF55681">
    <property type="entry name" value="Class II aaRS and biotin synthetases"/>
    <property type="match status" value="1"/>
</dbReference>
<dbReference type="SUPFAM" id="SSF101353">
    <property type="entry name" value="Putative anticodon-binding domain of alanyl-tRNA synthetase (AlaRS)"/>
    <property type="match status" value="1"/>
</dbReference>
<dbReference type="SUPFAM" id="SSF55186">
    <property type="entry name" value="ThrRS/AlaRS common domain"/>
    <property type="match status" value="1"/>
</dbReference>
<dbReference type="SUPFAM" id="SSF50447">
    <property type="entry name" value="Translation proteins"/>
    <property type="match status" value="1"/>
</dbReference>
<dbReference type="PROSITE" id="PS50860">
    <property type="entry name" value="AA_TRNA_LIGASE_II_ALA"/>
    <property type="match status" value="1"/>
</dbReference>
<reference key="1">
    <citation type="submission" date="2007-09" db="EMBL/GenBank/DDBJ databases">
        <title>Complete genome sequence of Rickettsia akari.</title>
        <authorList>
            <person name="Madan A."/>
            <person name="Fahey J."/>
            <person name="Helton E."/>
            <person name="Ketteman M."/>
            <person name="Madan A."/>
            <person name="Rodrigues S."/>
            <person name="Sanchez A."/>
            <person name="Whiting M."/>
            <person name="Dasch G."/>
            <person name="Eremeeva M."/>
        </authorList>
    </citation>
    <scope>NUCLEOTIDE SEQUENCE [LARGE SCALE GENOMIC DNA]</scope>
    <source>
        <strain>Hartford</strain>
    </source>
</reference>
<gene>
    <name evidence="1" type="primary">alaS</name>
    <name type="ordered locus">A1C_06625</name>
</gene>